<sequence length="510" mass="57493">MAAAGAMPGGLLLTFLLLAVVASGAYNSAGEPPVSRRSFPKGFIFGTASSSYQYEGGAAEGGRGPSIWDTFTHQHPEKIADRSNGDVASDSYHLYKEDVRLMKDMGMDAYRFSISWTRILPNGSLRGGVNKEGIKYYNNLINELLSKGVQPFITLFHWDSPQALEDKYNGFLSPNIINDFKDYAEICFKEFGDRVKNWITFNEPWTFCSNGYATGLFAPGRCSPWEKGNCSVGDSGREPYTACHHQLLAHAETVRLYKAKYQALQKGKIGITLVSHWFVPFSRSKSNNDAAKRAIDFMFGWFMDPLIRGDYPLSMRGLVGNRLPQFTKEQSKLVKGAFDFIGLNYYTANYADNLPPSNGLNNSYTTDSRANLTGVRNGIPIGPQAASPWLYVYPQGFRDLLLYVKENYGNPTVYITENGVDEFNNKTLPLQEALKDDARIEYYHKHLLSLLSAIRDGANVKGYFAWSLLDNFEWSNGYTVRFGINFVDYNDGRKRYPKNSAHWFKKFLLK</sequence>
<name>BGL12_ORYSI</name>
<reference key="1">
    <citation type="journal article" date="2002" name="Nature">
        <title>Sequence and analysis of rice chromosome 4.</title>
        <authorList>
            <person name="Feng Q."/>
            <person name="Zhang Y."/>
            <person name="Hao P."/>
            <person name="Wang S."/>
            <person name="Fu G."/>
            <person name="Huang Y."/>
            <person name="Li Y."/>
            <person name="Zhu J."/>
            <person name="Liu Y."/>
            <person name="Hu X."/>
            <person name="Jia P."/>
            <person name="Zhang Y."/>
            <person name="Zhao Q."/>
            <person name="Ying K."/>
            <person name="Yu S."/>
            <person name="Tang Y."/>
            <person name="Weng Q."/>
            <person name="Zhang L."/>
            <person name="Lu Y."/>
            <person name="Mu J."/>
            <person name="Lu Y."/>
            <person name="Zhang L.S."/>
            <person name="Yu Z."/>
            <person name="Fan D."/>
            <person name="Liu X."/>
            <person name="Lu T."/>
            <person name="Li C."/>
            <person name="Wu Y."/>
            <person name="Sun T."/>
            <person name="Lei H."/>
            <person name="Li T."/>
            <person name="Hu H."/>
            <person name="Guan J."/>
            <person name="Wu M."/>
            <person name="Zhang R."/>
            <person name="Zhou B."/>
            <person name="Chen Z."/>
            <person name="Chen L."/>
            <person name="Jin Z."/>
            <person name="Wang R."/>
            <person name="Yin H."/>
            <person name="Cai Z."/>
            <person name="Ren S."/>
            <person name="Lv G."/>
            <person name="Gu W."/>
            <person name="Zhu G."/>
            <person name="Tu Y."/>
            <person name="Jia J."/>
            <person name="Zhang Y."/>
            <person name="Chen J."/>
            <person name="Kang H."/>
            <person name="Chen X."/>
            <person name="Shao C."/>
            <person name="Sun Y."/>
            <person name="Hu Q."/>
            <person name="Zhang X."/>
            <person name="Zhang W."/>
            <person name="Wang L."/>
            <person name="Ding C."/>
            <person name="Sheng H."/>
            <person name="Gu J."/>
            <person name="Chen S."/>
            <person name="Ni L."/>
            <person name="Zhu F."/>
            <person name="Chen W."/>
            <person name="Lan L."/>
            <person name="Lai Y."/>
            <person name="Cheng Z."/>
            <person name="Gu M."/>
            <person name="Jiang J."/>
            <person name="Li J."/>
            <person name="Hong G."/>
            <person name="Xue Y."/>
            <person name="Han B."/>
        </authorList>
    </citation>
    <scope>NUCLEOTIDE SEQUENCE [LARGE SCALE GENOMIC DNA]</scope>
    <source>
        <strain>cv. Guang-Lu-Ai No.4</strain>
    </source>
</reference>
<reference key="2">
    <citation type="journal article" date="2005" name="PLoS Biol.">
        <title>The genomes of Oryza sativa: a history of duplications.</title>
        <authorList>
            <person name="Yu J."/>
            <person name="Wang J."/>
            <person name="Lin W."/>
            <person name="Li S."/>
            <person name="Li H."/>
            <person name="Zhou J."/>
            <person name="Ni P."/>
            <person name="Dong W."/>
            <person name="Hu S."/>
            <person name="Zeng C."/>
            <person name="Zhang J."/>
            <person name="Zhang Y."/>
            <person name="Li R."/>
            <person name="Xu Z."/>
            <person name="Li S."/>
            <person name="Li X."/>
            <person name="Zheng H."/>
            <person name="Cong L."/>
            <person name="Lin L."/>
            <person name="Yin J."/>
            <person name="Geng J."/>
            <person name="Li G."/>
            <person name="Shi J."/>
            <person name="Liu J."/>
            <person name="Lv H."/>
            <person name="Li J."/>
            <person name="Wang J."/>
            <person name="Deng Y."/>
            <person name="Ran L."/>
            <person name="Shi X."/>
            <person name="Wang X."/>
            <person name="Wu Q."/>
            <person name="Li C."/>
            <person name="Ren X."/>
            <person name="Wang J."/>
            <person name="Wang X."/>
            <person name="Li D."/>
            <person name="Liu D."/>
            <person name="Zhang X."/>
            <person name="Ji Z."/>
            <person name="Zhao W."/>
            <person name="Sun Y."/>
            <person name="Zhang Z."/>
            <person name="Bao J."/>
            <person name="Han Y."/>
            <person name="Dong L."/>
            <person name="Ji J."/>
            <person name="Chen P."/>
            <person name="Wu S."/>
            <person name="Liu J."/>
            <person name="Xiao Y."/>
            <person name="Bu D."/>
            <person name="Tan J."/>
            <person name="Yang L."/>
            <person name="Ye C."/>
            <person name="Zhang J."/>
            <person name="Xu J."/>
            <person name="Zhou Y."/>
            <person name="Yu Y."/>
            <person name="Zhang B."/>
            <person name="Zhuang S."/>
            <person name="Wei H."/>
            <person name="Liu B."/>
            <person name="Lei M."/>
            <person name="Yu H."/>
            <person name="Li Y."/>
            <person name="Xu H."/>
            <person name="Wei S."/>
            <person name="He X."/>
            <person name="Fang L."/>
            <person name="Zhang Z."/>
            <person name="Zhang Y."/>
            <person name="Huang X."/>
            <person name="Su Z."/>
            <person name="Tong W."/>
            <person name="Li J."/>
            <person name="Tong Z."/>
            <person name="Li S."/>
            <person name="Ye J."/>
            <person name="Wang L."/>
            <person name="Fang L."/>
            <person name="Lei T."/>
            <person name="Chen C.-S."/>
            <person name="Chen H.-C."/>
            <person name="Xu Z."/>
            <person name="Li H."/>
            <person name="Huang H."/>
            <person name="Zhang F."/>
            <person name="Xu H."/>
            <person name="Li N."/>
            <person name="Zhao C."/>
            <person name="Li S."/>
            <person name="Dong L."/>
            <person name="Huang Y."/>
            <person name="Li L."/>
            <person name="Xi Y."/>
            <person name="Qi Q."/>
            <person name="Li W."/>
            <person name="Zhang B."/>
            <person name="Hu W."/>
            <person name="Zhang Y."/>
            <person name="Tian X."/>
            <person name="Jiao Y."/>
            <person name="Liang X."/>
            <person name="Jin J."/>
            <person name="Gao L."/>
            <person name="Zheng W."/>
            <person name="Hao B."/>
            <person name="Liu S.-M."/>
            <person name="Wang W."/>
            <person name="Yuan L."/>
            <person name="Cao M."/>
            <person name="McDermott J."/>
            <person name="Samudrala R."/>
            <person name="Wang J."/>
            <person name="Wong G.K.-S."/>
            <person name="Yang H."/>
        </authorList>
    </citation>
    <scope>NUCLEOTIDE SEQUENCE [LARGE SCALE GENOMIC DNA]</scope>
    <source>
        <strain>cv. 93-11</strain>
    </source>
</reference>
<keyword id="KW-1015">Disulfide bond</keyword>
<keyword id="KW-0325">Glycoprotein</keyword>
<keyword id="KW-0326">Glycosidase</keyword>
<keyword id="KW-0378">Hydrolase</keyword>
<keyword id="KW-1185">Reference proteome</keyword>
<keyword id="KW-0964">Secreted</keyword>
<keyword id="KW-0732">Signal</keyword>
<protein>
    <recommendedName>
        <fullName evidence="8">Beta-glucosidase 12</fullName>
        <ecNumber evidence="2">3.2.1.21</ecNumber>
    </recommendedName>
</protein>
<accession>B8AVF0</accession>
<accession>Q01KB2</accession>
<evidence type="ECO:0000250" key="1">
    <source>
        <dbReference type="UniProtKB" id="Q1XH05"/>
    </source>
</evidence>
<evidence type="ECO:0000250" key="2">
    <source>
        <dbReference type="UniProtKB" id="Q75I94"/>
    </source>
</evidence>
<evidence type="ECO:0000250" key="3">
    <source>
        <dbReference type="UniProtKB" id="Q7XKV4"/>
    </source>
</evidence>
<evidence type="ECO:0000250" key="4">
    <source>
        <dbReference type="UniProtKB" id="Q7XSK0"/>
    </source>
</evidence>
<evidence type="ECO:0000250" key="5">
    <source>
        <dbReference type="UniProtKB" id="Q9SPP9"/>
    </source>
</evidence>
<evidence type="ECO:0000255" key="6"/>
<evidence type="ECO:0000255" key="7">
    <source>
        <dbReference type="PROSITE-ProRule" id="PRU00498"/>
    </source>
</evidence>
<evidence type="ECO:0000305" key="8"/>
<evidence type="ECO:0000312" key="9">
    <source>
        <dbReference type="EMBL" id="CAH66812.1"/>
    </source>
</evidence>
<evidence type="ECO:0000312" key="10">
    <source>
        <dbReference type="EMBL" id="EEC77466.1"/>
    </source>
</evidence>
<dbReference type="EC" id="3.2.1.21" evidence="2"/>
<dbReference type="EMBL" id="CR855145">
    <property type="protein sequence ID" value="CAH66812.1"/>
    <property type="molecule type" value="Genomic_DNA"/>
</dbReference>
<dbReference type="EMBL" id="CM000129">
    <property type="protein sequence ID" value="EEC77466.1"/>
    <property type="molecule type" value="Genomic_DNA"/>
</dbReference>
<dbReference type="SMR" id="B8AVF0"/>
<dbReference type="STRING" id="39946.B8AVF0"/>
<dbReference type="CAZy" id="GH1">
    <property type="family name" value="Glycoside Hydrolase Family 1"/>
</dbReference>
<dbReference type="GlyCosmos" id="B8AVF0">
    <property type="glycosylation" value="5 sites, No reported glycans"/>
</dbReference>
<dbReference type="EnsemblPlants" id="BGIOSGA014893-TA">
    <property type="protein sequence ID" value="BGIOSGA014893-PA"/>
    <property type="gene ID" value="BGIOSGA014893"/>
</dbReference>
<dbReference type="EnsemblPlants" id="OsGoSa_04g0016540.01">
    <property type="protein sequence ID" value="OsGoSa_04g0016540.01"/>
    <property type="gene ID" value="OsGoSa_04g0016540"/>
</dbReference>
<dbReference type="EnsemblPlants" id="OsIR64_04g0016100.01">
    <property type="protein sequence ID" value="OsIR64_04g0016100.01"/>
    <property type="gene ID" value="OsIR64_04g0016100"/>
</dbReference>
<dbReference type="EnsemblPlants" id="OsKYG_04g0016520.01">
    <property type="protein sequence ID" value="OsKYG_04g0016520.01"/>
    <property type="gene ID" value="OsKYG_04g0016520"/>
</dbReference>
<dbReference type="EnsemblPlants" id="OsLima_04g0016660.02">
    <property type="protein sequence ID" value="OsLima_04g0016660.02"/>
    <property type="gene ID" value="OsLima_04g0016660"/>
</dbReference>
<dbReference type="EnsemblPlants" id="OsLiXu_04g0017030.01">
    <property type="protein sequence ID" value="OsLiXu_04g0017030.01"/>
    <property type="gene ID" value="OsLiXu_04g0017030"/>
</dbReference>
<dbReference type="EnsemblPlants" id="OsMH63_04G017440_03">
    <property type="protein sequence ID" value="OsMH63_04G017440_03"/>
    <property type="gene ID" value="OsMH63_04G017440"/>
</dbReference>
<dbReference type="EnsemblPlants" id="OsPr106_04g0017310.01">
    <property type="protein sequence ID" value="OsPr106_04g0017310.01"/>
    <property type="gene ID" value="OsPr106_04g0017310"/>
</dbReference>
<dbReference type="EnsemblPlants" id="OsZS97_04G017490_02">
    <property type="protein sequence ID" value="OsZS97_04G017490_02"/>
    <property type="gene ID" value="OsZS97_04G017490"/>
</dbReference>
<dbReference type="Gramene" id="BGIOSGA014893-TA">
    <property type="protein sequence ID" value="BGIOSGA014893-PA"/>
    <property type="gene ID" value="BGIOSGA014893"/>
</dbReference>
<dbReference type="Gramene" id="OsGoSa_04g0016540.01">
    <property type="protein sequence ID" value="OsGoSa_04g0016540.01"/>
    <property type="gene ID" value="OsGoSa_04g0016540"/>
</dbReference>
<dbReference type="Gramene" id="OsIR64_04g0016100.01">
    <property type="protein sequence ID" value="OsIR64_04g0016100.01"/>
    <property type="gene ID" value="OsIR64_04g0016100"/>
</dbReference>
<dbReference type="Gramene" id="OsKYG_04g0016520.01">
    <property type="protein sequence ID" value="OsKYG_04g0016520.01"/>
    <property type="gene ID" value="OsKYG_04g0016520"/>
</dbReference>
<dbReference type="Gramene" id="OsLima_04g0016660.02">
    <property type="protein sequence ID" value="OsLima_04g0016660.02"/>
    <property type="gene ID" value="OsLima_04g0016660"/>
</dbReference>
<dbReference type="Gramene" id="OsLiXu_04g0017030.01">
    <property type="protein sequence ID" value="OsLiXu_04g0017030.01"/>
    <property type="gene ID" value="OsLiXu_04g0017030"/>
</dbReference>
<dbReference type="Gramene" id="OsMH63_04G017440_03">
    <property type="protein sequence ID" value="OsMH63_04G017440_03"/>
    <property type="gene ID" value="OsMH63_04G017440"/>
</dbReference>
<dbReference type="Gramene" id="OsPr106_04g0017310.01">
    <property type="protein sequence ID" value="OsPr106_04g0017310.01"/>
    <property type="gene ID" value="OsPr106_04g0017310"/>
</dbReference>
<dbReference type="Gramene" id="OsZS97_04G017490_02">
    <property type="protein sequence ID" value="OsZS97_04G017490_02"/>
    <property type="gene ID" value="OsZS97_04G017490"/>
</dbReference>
<dbReference type="HOGENOM" id="CLU_001859_1_0_1"/>
<dbReference type="OMA" id="IHRPLDW"/>
<dbReference type="OrthoDB" id="65569at2759"/>
<dbReference type="EvolutionaryTrace" id="B8AVF0"/>
<dbReference type="Proteomes" id="UP000007015">
    <property type="component" value="Chromosome 4"/>
</dbReference>
<dbReference type="GO" id="GO:0005576">
    <property type="term" value="C:extracellular region"/>
    <property type="evidence" value="ECO:0007669"/>
    <property type="project" value="UniProtKB-SubCell"/>
</dbReference>
<dbReference type="GO" id="GO:0033907">
    <property type="term" value="F:beta-D-fucosidase activity"/>
    <property type="evidence" value="ECO:0007669"/>
    <property type="project" value="EnsemblPlants"/>
</dbReference>
<dbReference type="GO" id="GO:0004565">
    <property type="term" value="F:beta-galactosidase activity"/>
    <property type="evidence" value="ECO:0007669"/>
    <property type="project" value="EnsemblPlants"/>
</dbReference>
<dbReference type="GO" id="GO:0080083">
    <property type="term" value="F:beta-gentiobiose beta-glucosidase activity"/>
    <property type="evidence" value="ECO:0007669"/>
    <property type="project" value="EnsemblPlants"/>
</dbReference>
<dbReference type="GO" id="GO:0047701">
    <property type="term" value="F:beta-L-arabinosidase activity"/>
    <property type="evidence" value="ECO:0007669"/>
    <property type="project" value="EnsemblPlants"/>
</dbReference>
<dbReference type="GO" id="GO:0004338">
    <property type="term" value="F:glucan exo-1,3-beta-glucosidase activity"/>
    <property type="evidence" value="ECO:0007669"/>
    <property type="project" value="EnsemblPlants"/>
</dbReference>
<dbReference type="GO" id="GO:0005975">
    <property type="term" value="P:carbohydrate metabolic process"/>
    <property type="evidence" value="ECO:0007669"/>
    <property type="project" value="InterPro"/>
</dbReference>
<dbReference type="FunFam" id="3.20.20.80:FF:000020">
    <property type="entry name" value="Beta-glucosidase 12"/>
    <property type="match status" value="1"/>
</dbReference>
<dbReference type="Gene3D" id="3.20.20.80">
    <property type="entry name" value="Glycosidases"/>
    <property type="match status" value="1"/>
</dbReference>
<dbReference type="InterPro" id="IPR001360">
    <property type="entry name" value="Glyco_hydro_1"/>
</dbReference>
<dbReference type="InterPro" id="IPR033132">
    <property type="entry name" value="Glyco_hydro_1_N_CS"/>
</dbReference>
<dbReference type="InterPro" id="IPR017853">
    <property type="entry name" value="Glycoside_hydrolase_SF"/>
</dbReference>
<dbReference type="PANTHER" id="PTHR10353:SF242">
    <property type="entry name" value="BETA-GLUCOSIDASE 12"/>
    <property type="match status" value="1"/>
</dbReference>
<dbReference type="PANTHER" id="PTHR10353">
    <property type="entry name" value="GLYCOSYL HYDROLASE"/>
    <property type="match status" value="1"/>
</dbReference>
<dbReference type="Pfam" id="PF00232">
    <property type="entry name" value="Glyco_hydro_1"/>
    <property type="match status" value="1"/>
</dbReference>
<dbReference type="PRINTS" id="PR00131">
    <property type="entry name" value="GLHYDRLASE1"/>
</dbReference>
<dbReference type="SUPFAM" id="SSF51445">
    <property type="entry name" value="(Trans)glycosidases"/>
    <property type="match status" value="1"/>
</dbReference>
<dbReference type="PROSITE" id="PS00653">
    <property type="entry name" value="GLYCOSYL_HYDROL_F1_2"/>
    <property type="match status" value="1"/>
</dbReference>
<proteinExistence type="inferred from homology"/>
<gene>
    <name evidence="8" type="primary">BGLU12</name>
    <name evidence="10" type="ORF">OsI_16288</name>
    <name evidence="9" type="ORF">OSIGBa0135C13.7</name>
</gene>
<feature type="signal peptide" evidence="6">
    <location>
        <begin position="1"/>
        <end position="24"/>
    </location>
</feature>
<feature type="chain" id="PRO_0000434411" description="Beta-glucosidase 12" evidence="6">
    <location>
        <begin position="25"/>
        <end position="510"/>
    </location>
</feature>
<feature type="active site" description="Proton donor" evidence="3">
    <location>
        <position position="203"/>
    </location>
</feature>
<feature type="active site" description="Nucleophile" evidence="3">
    <location>
        <position position="417"/>
    </location>
</feature>
<feature type="binding site" evidence="4">
    <location>
        <position position="53"/>
    </location>
    <ligand>
        <name>a beta-D-glucoside</name>
        <dbReference type="ChEBI" id="CHEBI:22798"/>
    </ligand>
</feature>
<feature type="binding site" evidence="4">
    <location>
        <position position="157"/>
    </location>
    <ligand>
        <name>a beta-D-glucoside</name>
        <dbReference type="ChEBI" id="CHEBI:22798"/>
    </ligand>
</feature>
<feature type="binding site" evidence="4">
    <location>
        <begin position="202"/>
        <end position="203"/>
    </location>
    <ligand>
        <name>a beta-D-glucoside</name>
        <dbReference type="ChEBI" id="CHEBI:22798"/>
    </ligand>
</feature>
<feature type="binding site" evidence="4">
    <location>
        <position position="346"/>
    </location>
    <ligand>
        <name>a beta-D-glucoside</name>
        <dbReference type="ChEBI" id="CHEBI:22798"/>
    </ligand>
</feature>
<feature type="binding site" evidence="5">
    <location>
        <position position="417"/>
    </location>
    <ligand>
        <name>a beta-D-glucoside</name>
        <dbReference type="ChEBI" id="CHEBI:22798"/>
    </ligand>
</feature>
<feature type="binding site" evidence="4">
    <location>
        <position position="466"/>
    </location>
    <ligand>
        <name>a beta-D-glucoside</name>
        <dbReference type="ChEBI" id="CHEBI:22798"/>
    </ligand>
</feature>
<feature type="binding site" evidence="4">
    <location>
        <begin position="473"/>
        <end position="474"/>
    </location>
    <ligand>
        <name>a beta-D-glucoside</name>
        <dbReference type="ChEBI" id="CHEBI:22798"/>
    </ligand>
</feature>
<feature type="binding site" evidence="1">
    <location>
        <position position="482"/>
    </location>
    <ligand>
        <name>a beta-D-glucoside</name>
        <dbReference type="ChEBI" id="CHEBI:22798"/>
    </ligand>
</feature>
<feature type="glycosylation site" description="N-linked (GlcNAc...) asparagine" evidence="7">
    <location>
        <position position="122"/>
    </location>
</feature>
<feature type="glycosylation site" description="N-linked (GlcNAc...) asparagine" evidence="7">
    <location>
        <position position="229"/>
    </location>
</feature>
<feature type="glycosylation site" description="N-linked (GlcNAc...) asparagine" evidence="7">
    <location>
        <position position="361"/>
    </location>
</feature>
<feature type="glycosylation site" description="N-linked (GlcNAc...) asparagine" evidence="7">
    <location>
        <position position="371"/>
    </location>
</feature>
<feature type="glycosylation site" description="N-linked (GlcNAc...) asparagine" evidence="7">
    <location>
        <position position="425"/>
    </location>
</feature>
<feature type="disulfide bond" evidence="3">
    <location>
        <begin position="208"/>
        <end position="243"/>
    </location>
</feature>
<feature type="disulfide bond" evidence="3">
    <location>
        <begin position="222"/>
        <end position="230"/>
    </location>
</feature>
<organism>
    <name type="scientific">Oryza sativa subsp. indica</name>
    <name type="common">Rice</name>
    <dbReference type="NCBI Taxonomy" id="39946"/>
    <lineage>
        <taxon>Eukaryota</taxon>
        <taxon>Viridiplantae</taxon>
        <taxon>Streptophyta</taxon>
        <taxon>Embryophyta</taxon>
        <taxon>Tracheophyta</taxon>
        <taxon>Spermatophyta</taxon>
        <taxon>Magnoliopsida</taxon>
        <taxon>Liliopsida</taxon>
        <taxon>Poales</taxon>
        <taxon>Poaceae</taxon>
        <taxon>BOP clade</taxon>
        <taxon>Oryzoideae</taxon>
        <taxon>Oryzeae</taxon>
        <taxon>Oryzinae</taxon>
        <taxon>Oryza</taxon>
        <taxon>Oryza sativa</taxon>
    </lineage>
</organism>
<comment type="function">
    <text evidence="3">Hydrolyzes p-nitrophenyl beta-D-glucoside, p-nitrophenyl beta-D-galactoside, p-nitrophenyl beta-D-xyloside, p-nitrophenyl beta-D-fucoside, p-nitrophenyl beta-L-arabinoside, cello-oligosaccharides and laminaribiose.</text>
</comment>
<comment type="catalytic activity">
    <reaction evidence="2">
        <text>Hydrolysis of terminal, non-reducing beta-D-glucosyl residues with release of beta-D-glucose.</text>
        <dbReference type="EC" id="3.2.1.21"/>
    </reaction>
</comment>
<comment type="subcellular location">
    <subcellularLocation>
        <location evidence="8">Secreted</location>
    </subcellularLocation>
</comment>
<comment type="similarity">
    <text evidence="8">Belongs to the glycosyl hydrolase 1 family.</text>
</comment>